<accession>Q8F7J9</accession>
<dbReference type="EMBL" id="AE010300">
    <property type="protein sequence ID" value="AAN48145.2"/>
    <property type="molecule type" value="Genomic_DNA"/>
</dbReference>
<dbReference type="RefSeq" id="NP_711127.2">
    <property type="nucleotide sequence ID" value="NC_004342.2"/>
</dbReference>
<dbReference type="RefSeq" id="WP_000562102.1">
    <property type="nucleotide sequence ID" value="NC_004342.2"/>
</dbReference>
<dbReference type="SMR" id="Q8F7J9"/>
<dbReference type="FunCoup" id="Q8F7J9">
    <property type="interactions" value="438"/>
</dbReference>
<dbReference type="STRING" id="189518.LA_0946"/>
<dbReference type="PaxDb" id="189518-LA_0946"/>
<dbReference type="EnsemblBacteria" id="AAN48145">
    <property type="protein sequence ID" value="AAN48145"/>
    <property type="gene ID" value="LA_0946"/>
</dbReference>
<dbReference type="GeneID" id="61142582"/>
<dbReference type="KEGG" id="lil:LA_0946"/>
<dbReference type="PATRIC" id="fig|189518.3.peg.948"/>
<dbReference type="HOGENOM" id="CLU_148518_0_0_12"/>
<dbReference type="InParanoid" id="Q8F7J9"/>
<dbReference type="OrthoDB" id="9799262at2"/>
<dbReference type="PRO" id="PR:Q8F7J9"/>
<dbReference type="Proteomes" id="UP000001408">
    <property type="component" value="Chromosome I"/>
</dbReference>
<dbReference type="GO" id="GO:0022627">
    <property type="term" value="C:cytosolic small ribosomal subunit"/>
    <property type="evidence" value="ECO:0000318"/>
    <property type="project" value="GO_Central"/>
</dbReference>
<dbReference type="GO" id="GO:0019843">
    <property type="term" value="F:rRNA binding"/>
    <property type="evidence" value="ECO:0007669"/>
    <property type="project" value="UniProtKB-UniRule"/>
</dbReference>
<dbReference type="GO" id="GO:0003735">
    <property type="term" value="F:structural constituent of ribosome"/>
    <property type="evidence" value="ECO:0007669"/>
    <property type="project" value="InterPro"/>
</dbReference>
<dbReference type="GO" id="GO:0006412">
    <property type="term" value="P:translation"/>
    <property type="evidence" value="ECO:0007669"/>
    <property type="project" value="UniProtKB-UniRule"/>
</dbReference>
<dbReference type="CDD" id="cd00353">
    <property type="entry name" value="Ribosomal_S15p_S13e"/>
    <property type="match status" value="1"/>
</dbReference>
<dbReference type="FunFam" id="1.10.287.10:FF:000002">
    <property type="entry name" value="30S ribosomal protein S15"/>
    <property type="match status" value="1"/>
</dbReference>
<dbReference type="Gene3D" id="6.10.250.3130">
    <property type="match status" value="1"/>
</dbReference>
<dbReference type="Gene3D" id="1.10.287.10">
    <property type="entry name" value="S15/NS1, RNA-binding"/>
    <property type="match status" value="1"/>
</dbReference>
<dbReference type="HAMAP" id="MF_01343_B">
    <property type="entry name" value="Ribosomal_uS15_B"/>
    <property type="match status" value="1"/>
</dbReference>
<dbReference type="InterPro" id="IPR000589">
    <property type="entry name" value="Ribosomal_uS15"/>
</dbReference>
<dbReference type="InterPro" id="IPR005290">
    <property type="entry name" value="Ribosomal_uS15_bac-type"/>
</dbReference>
<dbReference type="InterPro" id="IPR009068">
    <property type="entry name" value="uS15_NS1_RNA-bd_sf"/>
</dbReference>
<dbReference type="NCBIfam" id="TIGR00952">
    <property type="entry name" value="S15_bact"/>
    <property type="match status" value="1"/>
</dbReference>
<dbReference type="PANTHER" id="PTHR23321">
    <property type="entry name" value="RIBOSOMAL PROTEIN S15, BACTERIAL AND ORGANELLAR"/>
    <property type="match status" value="1"/>
</dbReference>
<dbReference type="PANTHER" id="PTHR23321:SF26">
    <property type="entry name" value="SMALL RIBOSOMAL SUBUNIT PROTEIN US15M"/>
    <property type="match status" value="1"/>
</dbReference>
<dbReference type="Pfam" id="PF00312">
    <property type="entry name" value="Ribosomal_S15"/>
    <property type="match status" value="1"/>
</dbReference>
<dbReference type="SMART" id="SM01387">
    <property type="entry name" value="Ribosomal_S15"/>
    <property type="match status" value="1"/>
</dbReference>
<dbReference type="SUPFAM" id="SSF47060">
    <property type="entry name" value="S15/NS1 RNA-binding domain"/>
    <property type="match status" value="1"/>
</dbReference>
<dbReference type="PROSITE" id="PS00362">
    <property type="entry name" value="RIBOSOMAL_S15"/>
    <property type="match status" value="1"/>
</dbReference>
<gene>
    <name evidence="1" type="primary">rpsO</name>
    <name type="ordered locus">LA_0946</name>
</gene>
<feature type="chain" id="PRO_0000115462" description="Small ribosomal subunit protein uS15">
    <location>
        <begin position="1"/>
        <end position="88"/>
    </location>
</feature>
<proteinExistence type="inferred from homology"/>
<name>RS15_LEPIN</name>
<evidence type="ECO:0000255" key="1">
    <source>
        <dbReference type="HAMAP-Rule" id="MF_01343"/>
    </source>
</evidence>
<evidence type="ECO:0000305" key="2"/>
<protein>
    <recommendedName>
        <fullName evidence="1">Small ribosomal subunit protein uS15</fullName>
    </recommendedName>
    <alternativeName>
        <fullName evidence="2">30S ribosomal protein S15</fullName>
    </alternativeName>
</protein>
<sequence>MIATEQKKQIISNFARKAGDTGSTEVQIALIDARIKELNEHFKTHKKDFHSKTGLLRLVGKRKKLLDYLKRTELERYKKLIETLGLRK</sequence>
<comment type="function">
    <text evidence="1">One of the primary rRNA binding proteins, it binds directly to 16S rRNA where it helps nucleate assembly of the platform of the 30S subunit by binding and bridging several RNA helices of the 16S rRNA.</text>
</comment>
<comment type="function">
    <text evidence="1">Forms an intersubunit bridge (bridge B4) with the 23S rRNA of the 50S subunit in the ribosome.</text>
</comment>
<comment type="subunit">
    <text evidence="1">Part of the 30S ribosomal subunit. Forms a bridge to the 50S subunit in the 70S ribosome, contacting the 23S rRNA.</text>
</comment>
<comment type="similarity">
    <text evidence="1">Belongs to the universal ribosomal protein uS15 family.</text>
</comment>
<reference key="1">
    <citation type="journal article" date="2003" name="Nature">
        <title>Unique physiological and pathogenic features of Leptospira interrogans revealed by whole-genome sequencing.</title>
        <authorList>
            <person name="Ren S.-X."/>
            <person name="Fu G."/>
            <person name="Jiang X.-G."/>
            <person name="Zeng R."/>
            <person name="Miao Y.-G."/>
            <person name="Xu H."/>
            <person name="Zhang Y.-X."/>
            <person name="Xiong H."/>
            <person name="Lu G."/>
            <person name="Lu L.-F."/>
            <person name="Jiang H.-Q."/>
            <person name="Jia J."/>
            <person name="Tu Y.-F."/>
            <person name="Jiang J.-X."/>
            <person name="Gu W.-Y."/>
            <person name="Zhang Y.-Q."/>
            <person name="Cai Z."/>
            <person name="Sheng H.-H."/>
            <person name="Yin H.-F."/>
            <person name="Zhang Y."/>
            <person name="Zhu G.-F."/>
            <person name="Wan M."/>
            <person name="Huang H.-L."/>
            <person name="Qian Z."/>
            <person name="Wang S.-Y."/>
            <person name="Ma W."/>
            <person name="Yao Z.-J."/>
            <person name="Shen Y."/>
            <person name="Qiang B.-Q."/>
            <person name="Xia Q.-C."/>
            <person name="Guo X.-K."/>
            <person name="Danchin A."/>
            <person name="Saint Girons I."/>
            <person name="Somerville R.L."/>
            <person name="Wen Y.-M."/>
            <person name="Shi M.-H."/>
            <person name="Chen Z."/>
            <person name="Xu J.-G."/>
            <person name="Zhao G.-P."/>
        </authorList>
    </citation>
    <scope>NUCLEOTIDE SEQUENCE [LARGE SCALE GENOMIC DNA]</scope>
    <source>
        <strain>56601</strain>
    </source>
</reference>
<keyword id="KW-1185">Reference proteome</keyword>
<keyword id="KW-0687">Ribonucleoprotein</keyword>
<keyword id="KW-0689">Ribosomal protein</keyword>
<keyword id="KW-0694">RNA-binding</keyword>
<keyword id="KW-0699">rRNA-binding</keyword>
<organism>
    <name type="scientific">Leptospira interrogans serogroup Icterohaemorrhagiae serovar Lai (strain 56601)</name>
    <dbReference type="NCBI Taxonomy" id="189518"/>
    <lineage>
        <taxon>Bacteria</taxon>
        <taxon>Pseudomonadati</taxon>
        <taxon>Spirochaetota</taxon>
        <taxon>Spirochaetia</taxon>
        <taxon>Leptospirales</taxon>
        <taxon>Leptospiraceae</taxon>
        <taxon>Leptospira</taxon>
    </lineage>
</organism>